<proteinExistence type="evidence at protein level"/>
<dbReference type="EMBL" id="AF414696">
    <property type="protein sequence ID" value="AAL07495.1"/>
    <property type="molecule type" value="mRNA"/>
</dbReference>
<dbReference type="PIR" id="A22163">
    <property type="entry name" value="A22163"/>
</dbReference>
<dbReference type="PIR" id="C48405">
    <property type="entry name" value="C48405"/>
</dbReference>
<dbReference type="PDB" id="1ACF">
    <property type="method" value="X-ray"/>
    <property type="resolution" value="2.00 A"/>
    <property type="chains" value="A=2-126"/>
</dbReference>
<dbReference type="PDBsum" id="1ACF"/>
<dbReference type="SMR" id="Q95VF7"/>
<dbReference type="VEuPathDB" id="AmoebaDB:ACA1_036400"/>
<dbReference type="EvolutionaryTrace" id="Q95VF7"/>
<dbReference type="GO" id="GO:0005938">
    <property type="term" value="C:cell cortex"/>
    <property type="evidence" value="ECO:0007669"/>
    <property type="project" value="TreeGrafter"/>
</dbReference>
<dbReference type="GO" id="GO:0005856">
    <property type="term" value="C:cytoskeleton"/>
    <property type="evidence" value="ECO:0007669"/>
    <property type="project" value="UniProtKB-SubCell"/>
</dbReference>
<dbReference type="GO" id="GO:0003785">
    <property type="term" value="F:actin monomer binding"/>
    <property type="evidence" value="ECO:0007669"/>
    <property type="project" value="TreeGrafter"/>
</dbReference>
<dbReference type="CDD" id="cd00148">
    <property type="entry name" value="PROF"/>
    <property type="match status" value="1"/>
</dbReference>
<dbReference type="FunFam" id="3.30.450.30:FF:000001">
    <property type="entry name" value="Profilin"/>
    <property type="match status" value="1"/>
</dbReference>
<dbReference type="Gene3D" id="3.30.450.30">
    <property type="entry name" value="Dynein light chain 2a, cytoplasmic"/>
    <property type="match status" value="1"/>
</dbReference>
<dbReference type="InterPro" id="IPR048278">
    <property type="entry name" value="PFN"/>
</dbReference>
<dbReference type="InterPro" id="IPR005455">
    <property type="entry name" value="PFN_euk"/>
</dbReference>
<dbReference type="InterPro" id="IPR036140">
    <property type="entry name" value="PFN_sf"/>
</dbReference>
<dbReference type="InterPro" id="IPR027310">
    <property type="entry name" value="Profilin_CS"/>
</dbReference>
<dbReference type="PANTHER" id="PTHR11604">
    <property type="entry name" value="PROFILIN"/>
    <property type="match status" value="1"/>
</dbReference>
<dbReference type="PANTHER" id="PTHR11604:SF0">
    <property type="entry name" value="PROFILIN"/>
    <property type="match status" value="1"/>
</dbReference>
<dbReference type="Pfam" id="PF00235">
    <property type="entry name" value="Profilin"/>
    <property type="match status" value="1"/>
</dbReference>
<dbReference type="PRINTS" id="PR00392">
    <property type="entry name" value="PROFILIN"/>
</dbReference>
<dbReference type="PRINTS" id="PR01640">
    <property type="entry name" value="PROFILINPLNT"/>
</dbReference>
<dbReference type="SMART" id="SM00392">
    <property type="entry name" value="PROF"/>
    <property type="match status" value="1"/>
</dbReference>
<dbReference type="SUPFAM" id="SSF55770">
    <property type="entry name" value="Profilin (actin-binding protein)"/>
    <property type="match status" value="1"/>
</dbReference>
<dbReference type="PROSITE" id="PS00414">
    <property type="entry name" value="PROFILIN"/>
    <property type="match status" value="1"/>
</dbReference>
<keyword id="KW-0002">3D-structure</keyword>
<keyword id="KW-0009">Actin-binding</keyword>
<keyword id="KW-0963">Cytoplasm</keyword>
<keyword id="KW-0206">Cytoskeleton</keyword>
<keyword id="KW-0903">Direct protein sequencing</keyword>
<keyword id="KW-0488">Methylation</keyword>
<sequence length="126" mass="12939">MSWQTYVDTNLVGTGAVTQAAILGLDGNTWATSAGFAVTPAQGTTLAGAFNNADAIRAGGFDLAGVHYVTLRADDRSIYGKKGAAGVITVKTSKAILVGVYNEKIQPGTAANVVEKLADYLIGQGF</sequence>
<evidence type="ECO:0000255" key="1"/>
<evidence type="ECO:0000269" key="2">
    <source>
    </source>
</evidence>
<evidence type="ECO:0000305" key="3"/>
<evidence type="ECO:0007829" key="4">
    <source>
        <dbReference type="PDB" id="1ACF"/>
    </source>
</evidence>
<organism>
    <name type="scientific">Acanthamoeba castellanii</name>
    <name type="common">Amoeba</name>
    <dbReference type="NCBI Taxonomy" id="5755"/>
    <lineage>
        <taxon>Eukaryota</taxon>
        <taxon>Amoebozoa</taxon>
        <taxon>Discosea</taxon>
        <taxon>Longamoebia</taxon>
        <taxon>Centramoebida</taxon>
        <taxon>Acanthamoebidae</taxon>
        <taxon>Acanthamoeba</taxon>
    </lineage>
</organism>
<comment type="function">
    <text>Binds to actin and affects the structure of the cytoskeleton. At high concentrations, profilin prevents the polymerization of actin, whereas it enhances it at low concentrations. By binding to PIP2, it inhibits the formation of IP3 and DG.</text>
</comment>
<comment type="subunit">
    <text>Occurs in many kinds of cells as a complex with monomeric actin in a 1:1 ratio.</text>
</comment>
<comment type="subcellular location">
    <subcellularLocation>
        <location>Cytoplasm</location>
        <location>Cytoskeleton</location>
    </subcellularLocation>
</comment>
<comment type="similarity">
    <text evidence="3">Belongs to the profilin family.</text>
</comment>
<name>PRO1B_ACACA</name>
<protein>
    <recommendedName>
        <fullName>Profilin-1B</fullName>
    </recommendedName>
    <alternativeName>
        <fullName>Acidic profilin IB</fullName>
    </alternativeName>
    <alternativeName>
        <fullName>Profilin IB</fullName>
    </alternativeName>
</protein>
<accession>Q95VF7</accession>
<accession>P07763</accession>
<feature type="initiator methionine" description="Removed" evidence="2">
    <location>
        <position position="1"/>
    </location>
</feature>
<feature type="chain" id="PRO_0000199584" description="Profilin-1B">
    <location>
        <begin position="2"/>
        <end position="126"/>
    </location>
</feature>
<feature type="region of interest" description="Actin binding" evidence="1">
    <location>
        <begin position="2"/>
        <end position="36"/>
    </location>
</feature>
<feature type="site" description="Actin binding">
    <location>
        <position position="116"/>
    </location>
</feature>
<feature type="modified residue" description="N6,N6,N6-trimethyllysine" evidence="2">
    <location>
        <position position="104"/>
    </location>
</feature>
<feature type="sequence conflict" description="In Ref. 2; AA sequence." evidence="3" ref="2">
    <original>S</original>
    <variation>T</variation>
    <location>
        <position position="2"/>
    </location>
</feature>
<feature type="sequence conflict" description="In Ref. 2; AA sequence." evidence="3" ref="2">
    <original>T</original>
    <variation>S</variation>
    <location>
        <position position="5"/>
    </location>
</feature>
<feature type="sequence conflict" description="In Ref. 2; AA sequence." evidence="3" ref="2">
    <original>TS</original>
    <variation>SF</variation>
    <location>
        <begin position="32"/>
        <end position="33"/>
    </location>
</feature>
<feature type="helix" evidence="4">
    <location>
        <begin position="3"/>
        <end position="8"/>
    </location>
</feature>
<feature type="turn" evidence="4">
    <location>
        <begin position="9"/>
        <end position="11"/>
    </location>
</feature>
<feature type="helix" evidence="4">
    <location>
        <begin position="12"/>
        <end position="14"/>
    </location>
</feature>
<feature type="strand" evidence="4">
    <location>
        <begin position="18"/>
        <end position="24"/>
    </location>
</feature>
<feature type="strand" evidence="4">
    <location>
        <begin position="29"/>
        <end position="32"/>
    </location>
</feature>
<feature type="helix" evidence="4">
    <location>
        <begin position="40"/>
        <end position="51"/>
    </location>
</feature>
<feature type="helix" evidence="4">
    <location>
        <begin position="54"/>
        <end position="59"/>
    </location>
</feature>
<feature type="strand" evidence="4">
    <location>
        <begin position="61"/>
        <end position="63"/>
    </location>
</feature>
<feature type="strand" evidence="4">
    <location>
        <begin position="66"/>
        <end position="82"/>
    </location>
</feature>
<feature type="strand" evidence="4">
    <location>
        <begin position="85"/>
        <end position="91"/>
    </location>
</feature>
<feature type="strand" evidence="4">
    <location>
        <begin position="93"/>
        <end position="101"/>
    </location>
</feature>
<feature type="helix" evidence="4">
    <location>
        <begin position="107"/>
        <end position="122"/>
    </location>
</feature>
<feature type="turn" evidence="4">
    <location>
        <begin position="123"/>
        <end position="125"/>
    </location>
</feature>
<reference key="1">
    <citation type="submission" date="2001-08" db="EMBL/GenBank/DDBJ databases">
        <title>Acanthamoeba castellanii profilin 1B.</title>
        <authorList>
            <person name="Cordingley J.S."/>
            <person name="Villemez C.L."/>
            <person name="Trzyna W.C."/>
        </authorList>
    </citation>
    <scope>NUCLEOTIDE SEQUENCE [MRNA]</scope>
</reference>
<reference key="2">
    <citation type="journal article" date="1985" name="J. Biol. Chem.">
        <title>The amino acid sequence of Acanthamoeba profilin.</title>
        <authorList>
            <person name="Ampe C."/>
            <person name="Vandekerckhove J."/>
            <person name="Brenner S.L."/>
            <person name="Tobacman L."/>
            <person name="Korn E.D."/>
        </authorList>
    </citation>
    <scope>PROTEIN SEQUENCE OF 2-126</scope>
    <scope>METHYLATION AT LYS-104</scope>
</reference>
<reference key="3">
    <citation type="journal article" date="1989" name="J. Cell Biol.">
        <title>Acanthamoeba actin and profilin can be cross-linked between glutamic acid 364 of actin and lysine 115 of profilin.</title>
        <authorList>
            <person name="Vandekerckhove J."/>
            <person name="Kaiser D.A."/>
            <person name="Pollard T.D."/>
        </authorList>
    </citation>
    <scope>CROSS-LINKING TO ACTIN</scope>
</reference>
<reference key="4">
    <citation type="journal article" date="1994" name="Proc. Natl. Acad. Sci. U.S.A.">
        <title>X-ray structures of isoforms of the actin-binding protein profilin that differ in their affinity for phosphatidylinositol phosphates.</title>
        <authorList>
            <person name="Fedorov A.A."/>
            <person name="Magnus K.A."/>
            <person name="Graupe M.H."/>
            <person name="Lattman E.E."/>
            <person name="Pollard T.D."/>
            <person name="Almo S.C."/>
        </authorList>
    </citation>
    <scope>X-RAY CRYSTALLOGRAPHY (2.0 ANGSTROMS)</scope>
</reference>